<protein>
    <recommendedName>
        <fullName evidence="1">Phosphopantetheine adenylyltransferase</fullName>
        <ecNumber evidence="1">2.7.7.3</ecNumber>
    </recommendedName>
    <alternativeName>
        <fullName evidence="1">Dephospho-CoA pyrophosphorylase</fullName>
    </alternativeName>
    <alternativeName>
        <fullName evidence="1">Pantetheine-phosphate adenylyltransferase</fullName>
        <shortName evidence="1">PPAT</shortName>
    </alternativeName>
</protein>
<reference key="1">
    <citation type="journal article" date="2008" name="J. Bacteriol.">
        <title>Complete genome sequence of uropathogenic Proteus mirabilis, a master of both adherence and motility.</title>
        <authorList>
            <person name="Pearson M.M."/>
            <person name="Sebaihia M."/>
            <person name="Churcher C."/>
            <person name="Quail M.A."/>
            <person name="Seshasayee A.S."/>
            <person name="Luscombe N.M."/>
            <person name="Abdellah Z."/>
            <person name="Arrosmith C."/>
            <person name="Atkin B."/>
            <person name="Chillingworth T."/>
            <person name="Hauser H."/>
            <person name="Jagels K."/>
            <person name="Moule S."/>
            <person name="Mungall K."/>
            <person name="Norbertczak H."/>
            <person name="Rabbinowitsch E."/>
            <person name="Walker D."/>
            <person name="Whithead S."/>
            <person name="Thomson N.R."/>
            <person name="Rather P.N."/>
            <person name="Parkhill J."/>
            <person name="Mobley H.L.T."/>
        </authorList>
    </citation>
    <scope>NUCLEOTIDE SEQUENCE [LARGE SCALE GENOMIC DNA]</scope>
    <source>
        <strain>HI4320</strain>
    </source>
</reference>
<keyword id="KW-0067">ATP-binding</keyword>
<keyword id="KW-0173">Coenzyme A biosynthesis</keyword>
<keyword id="KW-0963">Cytoplasm</keyword>
<keyword id="KW-0460">Magnesium</keyword>
<keyword id="KW-0547">Nucleotide-binding</keyword>
<keyword id="KW-0548">Nucleotidyltransferase</keyword>
<keyword id="KW-1185">Reference proteome</keyword>
<keyword id="KW-0808">Transferase</keyword>
<organism>
    <name type="scientific">Proteus mirabilis (strain HI4320)</name>
    <dbReference type="NCBI Taxonomy" id="529507"/>
    <lineage>
        <taxon>Bacteria</taxon>
        <taxon>Pseudomonadati</taxon>
        <taxon>Pseudomonadota</taxon>
        <taxon>Gammaproteobacteria</taxon>
        <taxon>Enterobacterales</taxon>
        <taxon>Morganellaceae</taxon>
        <taxon>Proteus</taxon>
    </lineage>
</organism>
<name>COAD_PROMH</name>
<evidence type="ECO:0000255" key="1">
    <source>
        <dbReference type="HAMAP-Rule" id="MF_00151"/>
    </source>
</evidence>
<comment type="function">
    <text evidence="1">Reversibly transfers an adenylyl group from ATP to 4'-phosphopantetheine, yielding dephospho-CoA (dPCoA) and pyrophosphate.</text>
</comment>
<comment type="catalytic activity">
    <reaction evidence="1">
        <text>(R)-4'-phosphopantetheine + ATP + H(+) = 3'-dephospho-CoA + diphosphate</text>
        <dbReference type="Rhea" id="RHEA:19801"/>
        <dbReference type="ChEBI" id="CHEBI:15378"/>
        <dbReference type="ChEBI" id="CHEBI:30616"/>
        <dbReference type="ChEBI" id="CHEBI:33019"/>
        <dbReference type="ChEBI" id="CHEBI:57328"/>
        <dbReference type="ChEBI" id="CHEBI:61723"/>
        <dbReference type="EC" id="2.7.7.3"/>
    </reaction>
</comment>
<comment type="cofactor">
    <cofactor evidence="1">
        <name>Mg(2+)</name>
        <dbReference type="ChEBI" id="CHEBI:18420"/>
    </cofactor>
</comment>
<comment type="pathway">
    <text evidence="1">Cofactor biosynthesis; coenzyme A biosynthesis; CoA from (R)-pantothenate: step 4/5.</text>
</comment>
<comment type="subunit">
    <text evidence="1">Homohexamer.</text>
</comment>
<comment type="subcellular location">
    <subcellularLocation>
        <location evidence="1">Cytoplasm</location>
    </subcellularLocation>
</comment>
<comment type="similarity">
    <text evidence="1">Belongs to the bacterial CoaD family.</text>
</comment>
<accession>B4F0X7</accession>
<dbReference type="EC" id="2.7.7.3" evidence="1"/>
<dbReference type="EMBL" id="AM942759">
    <property type="protein sequence ID" value="CAR46217.1"/>
    <property type="molecule type" value="Genomic_DNA"/>
</dbReference>
<dbReference type="RefSeq" id="WP_004246474.1">
    <property type="nucleotide sequence ID" value="NC_010554.1"/>
</dbReference>
<dbReference type="SMR" id="B4F0X7"/>
<dbReference type="EnsemblBacteria" id="CAR46217">
    <property type="protein sequence ID" value="CAR46217"/>
    <property type="gene ID" value="PMI3165"/>
</dbReference>
<dbReference type="GeneID" id="6802670"/>
<dbReference type="KEGG" id="pmr:PMI3165"/>
<dbReference type="eggNOG" id="COG0669">
    <property type="taxonomic scope" value="Bacteria"/>
</dbReference>
<dbReference type="HOGENOM" id="CLU_100149_0_1_6"/>
<dbReference type="UniPathway" id="UPA00241">
    <property type="reaction ID" value="UER00355"/>
</dbReference>
<dbReference type="Proteomes" id="UP000008319">
    <property type="component" value="Chromosome"/>
</dbReference>
<dbReference type="GO" id="GO:0005737">
    <property type="term" value="C:cytoplasm"/>
    <property type="evidence" value="ECO:0007669"/>
    <property type="project" value="UniProtKB-SubCell"/>
</dbReference>
<dbReference type="GO" id="GO:0005524">
    <property type="term" value="F:ATP binding"/>
    <property type="evidence" value="ECO:0007669"/>
    <property type="project" value="UniProtKB-KW"/>
</dbReference>
<dbReference type="GO" id="GO:0004595">
    <property type="term" value="F:pantetheine-phosphate adenylyltransferase activity"/>
    <property type="evidence" value="ECO:0007669"/>
    <property type="project" value="UniProtKB-UniRule"/>
</dbReference>
<dbReference type="GO" id="GO:0015937">
    <property type="term" value="P:coenzyme A biosynthetic process"/>
    <property type="evidence" value="ECO:0007669"/>
    <property type="project" value="UniProtKB-UniRule"/>
</dbReference>
<dbReference type="CDD" id="cd02163">
    <property type="entry name" value="PPAT"/>
    <property type="match status" value="1"/>
</dbReference>
<dbReference type="FunFam" id="3.40.50.620:FF:000012">
    <property type="entry name" value="Phosphopantetheine adenylyltransferase"/>
    <property type="match status" value="1"/>
</dbReference>
<dbReference type="Gene3D" id="3.40.50.620">
    <property type="entry name" value="HUPs"/>
    <property type="match status" value="1"/>
</dbReference>
<dbReference type="HAMAP" id="MF_00151">
    <property type="entry name" value="PPAT_bact"/>
    <property type="match status" value="1"/>
</dbReference>
<dbReference type="InterPro" id="IPR004821">
    <property type="entry name" value="Cyt_trans-like"/>
</dbReference>
<dbReference type="InterPro" id="IPR001980">
    <property type="entry name" value="PPAT"/>
</dbReference>
<dbReference type="InterPro" id="IPR014729">
    <property type="entry name" value="Rossmann-like_a/b/a_fold"/>
</dbReference>
<dbReference type="NCBIfam" id="TIGR01510">
    <property type="entry name" value="coaD_prev_kdtB"/>
    <property type="match status" value="1"/>
</dbReference>
<dbReference type="NCBIfam" id="TIGR00125">
    <property type="entry name" value="cyt_tran_rel"/>
    <property type="match status" value="1"/>
</dbReference>
<dbReference type="PANTHER" id="PTHR21342">
    <property type="entry name" value="PHOSPHOPANTETHEINE ADENYLYLTRANSFERASE"/>
    <property type="match status" value="1"/>
</dbReference>
<dbReference type="PANTHER" id="PTHR21342:SF1">
    <property type="entry name" value="PHOSPHOPANTETHEINE ADENYLYLTRANSFERASE"/>
    <property type="match status" value="1"/>
</dbReference>
<dbReference type="Pfam" id="PF01467">
    <property type="entry name" value="CTP_transf_like"/>
    <property type="match status" value="1"/>
</dbReference>
<dbReference type="PRINTS" id="PR01020">
    <property type="entry name" value="LPSBIOSNTHSS"/>
</dbReference>
<dbReference type="SUPFAM" id="SSF52374">
    <property type="entry name" value="Nucleotidylyl transferase"/>
    <property type="match status" value="1"/>
</dbReference>
<sequence>MKNKAIYPGTFDPITYGHIDILTRAAGMFDTVLLAIAASARKNPMFSLEERVALAKEVTQHLPNVEVVGFCELMANFAKKQQATILIRGVRSVSDFEYEWQLANMNRHFAPDLDSVFLLPSQNLSFVSSSLIKDVARHDGDVSTFLPEVVATAMLQKLGKR</sequence>
<proteinExistence type="inferred from homology"/>
<gene>
    <name evidence="1" type="primary">coaD</name>
    <name type="ordered locus">PMI3165</name>
</gene>
<feature type="chain" id="PRO_1000096825" description="Phosphopantetheine adenylyltransferase">
    <location>
        <begin position="1"/>
        <end position="161"/>
    </location>
</feature>
<feature type="binding site" evidence="1">
    <location>
        <begin position="10"/>
        <end position="11"/>
    </location>
    <ligand>
        <name>ATP</name>
        <dbReference type="ChEBI" id="CHEBI:30616"/>
    </ligand>
</feature>
<feature type="binding site" evidence="1">
    <location>
        <position position="10"/>
    </location>
    <ligand>
        <name>substrate</name>
    </ligand>
</feature>
<feature type="binding site" evidence="1">
    <location>
        <position position="18"/>
    </location>
    <ligand>
        <name>ATP</name>
        <dbReference type="ChEBI" id="CHEBI:30616"/>
    </ligand>
</feature>
<feature type="binding site" evidence="1">
    <location>
        <position position="42"/>
    </location>
    <ligand>
        <name>substrate</name>
    </ligand>
</feature>
<feature type="binding site" evidence="1">
    <location>
        <position position="74"/>
    </location>
    <ligand>
        <name>substrate</name>
    </ligand>
</feature>
<feature type="binding site" evidence="1">
    <location>
        <position position="88"/>
    </location>
    <ligand>
        <name>substrate</name>
    </ligand>
</feature>
<feature type="binding site" evidence="1">
    <location>
        <begin position="89"/>
        <end position="91"/>
    </location>
    <ligand>
        <name>ATP</name>
        <dbReference type="ChEBI" id="CHEBI:30616"/>
    </ligand>
</feature>
<feature type="binding site" evidence="1">
    <location>
        <position position="99"/>
    </location>
    <ligand>
        <name>ATP</name>
        <dbReference type="ChEBI" id="CHEBI:30616"/>
    </ligand>
</feature>
<feature type="binding site" evidence="1">
    <location>
        <begin position="124"/>
        <end position="130"/>
    </location>
    <ligand>
        <name>ATP</name>
        <dbReference type="ChEBI" id="CHEBI:30616"/>
    </ligand>
</feature>
<feature type="site" description="Transition state stabilizer" evidence="1">
    <location>
        <position position="18"/>
    </location>
</feature>